<protein>
    <recommendedName>
        <fullName evidence="1">23S rRNA (uracil(1939)-C(5))-methyltransferase RlmD</fullName>
        <ecNumber evidence="1">2.1.1.190</ecNumber>
    </recommendedName>
    <alternativeName>
        <fullName evidence="1">23S rRNA(m5U1939)-methyltransferase</fullName>
    </alternativeName>
</protein>
<sequence>MSEAVPTSARKSKNAPVAPGPAPVLEIESLDMEARGVGRTMTEDGEPGKVIFVEGALPGERVTYSSYRRKPSYEQATVVDILRPSVMRTQPKCTFFGTCGGCSMQHLDMRAQVAVKQRVLEDNLWHLAKLRAETMFAPIHGPSWGYRYRARLTVRNVAKKGGVLVGFHEKKSSYVADMTSCEVLPPHVSAMLVPLRRLVEGLSIRDRMPQIELAVGSTVTALVLRVLEPINADDEALLRAFADEHKVQFWLQPKGPDTVTPFYPLDVSLDYTLPEFGIRMPFKPTDFTQVNHQINRVLVGRALRLLAPSRDDRVLDLFCGIGNFTLPLARLSREVMGIEGSDTLTTRALANARENGVDGHTTFACRNLFEVTGDDLRALGAFDKFLIDPPREGALAVSKALAEIAQSGAGPLPKRIVYVSCNPSTLARDAGLLVHEAGYRLKGAGVVNMFPNTSHVESIALFERD</sequence>
<organism>
    <name type="scientific">Burkholderia cenocepacia (strain HI2424)</name>
    <dbReference type="NCBI Taxonomy" id="331272"/>
    <lineage>
        <taxon>Bacteria</taxon>
        <taxon>Pseudomonadati</taxon>
        <taxon>Pseudomonadota</taxon>
        <taxon>Betaproteobacteria</taxon>
        <taxon>Burkholderiales</taxon>
        <taxon>Burkholderiaceae</taxon>
        <taxon>Burkholderia</taxon>
        <taxon>Burkholderia cepacia complex</taxon>
    </lineage>
</organism>
<gene>
    <name evidence="1" type="primary">rlmD</name>
    <name type="synonym">rumA</name>
    <name type="ordered locus">Bcen2424_1817</name>
</gene>
<evidence type="ECO:0000255" key="1">
    <source>
        <dbReference type="HAMAP-Rule" id="MF_01010"/>
    </source>
</evidence>
<evidence type="ECO:0000256" key="2">
    <source>
        <dbReference type="SAM" id="MobiDB-lite"/>
    </source>
</evidence>
<feature type="chain" id="PRO_0000282032" description="23S rRNA (uracil(1939)-C(5))-methyltransferase RlmD">
    <location>
        <begin position="1"/>
        <end position="465"/>
    </location>
</feature>
<feature type="domain" description="TRAM" evidence="1">
    <location>
        <begin position="16"/>
        <end position="80"/>
    </location>
</feature>
<feature type="region of interest" description="Disordered" evidence="2">
    <location>
        <begin position="1"/>
        <end position="22"/>
    </location>
</feature>
<feature type="active site" description="Nucleophile" evidence="1">
    <location>
        <position position="421"/>
    </location>
</feature>
<feature type="binding site" evidence="1">
    <location>
        <position position="93"/>
    </location>
    <ligand>
        <name>[4Fe-4S] cluster</name>
        <dbReference type="ChEBI" id="CHEBI:49883"/>
    </ligand>
</feature>
<feature type="binding site" evidence="1">
    <location>
        <position position="99"/>
    </location>
    <ligand>
        <name>[4Fe-4S] cluster</name>
        <dbReference type="ChEBI" id="CHEBI:49883"/>
    </ligand>
</feature>
<feature type="binding site" evidence="1">
    <location>
        <position position="102"/>
    </location>
    <ligand>
        <name>[4Fe-4S] cluster</name>
        <dbReference type="ChEBI" id="CHEBI:49883"/>
    </ligand>
</feature>
<feature type="binding site" evidence="1">
    <location>
        <position position="181"/>
    </location>
    <ligand>
        <name>[4Fe-4S] cluster</name>
        <dbReference type="ChEBI" id="CHEBI:49883"/>
    </ligand>
</feature>
<feature type="binding site" evidence="1">
    <location>
        <position position="289"/>
    </location>
    <ligand>
        <name>S-adenosyl-L-methionine</name>
        <dbReference type="ChEBI" id="CHEBI:59789"/>
    </ligand>
</feature>
<feature type="binding site" evidence="1">
    <location>
        <position position="318"/>
    </location>
    <ligand>
        <name>S-adenosyl-L-methionine</name>
        <dbReference type="ChEBI" id="CHEBI:59789"/>
    </ligand>
</feature>
<feature type="binding site" evidence="1">
    <location>
        <position position="323"/>
    </location>
    <ligand>
        <name>S-adenosyl-L-methionine</name>
        <dbReference type="ChEBI" id="CHEBI:59789"/>
    </ligand>
</feature>
<feature type="binding site" evidence="1">
    <location>
        <position position="339"/>
    </location>
    <ligand>
        <name>S-adenosyl-L-methionine</name>
        <dbReference type="ChEBI" id="CHEBI:59789"/>
    </ligand>
</feature>
<feature type="binding site" evidence="1">
    <location>
        <position position="367"/>
    </location>
    <ligand>
        <name>S-adenosyl-L-methionine</name>
        <dbReference type="ChEBI" id="CHEBI:59789"/>
    </ligand>
</feature>
<feature type="binding site" evidence="1">
    <location>
        <position position="388"/>
    </location>
    <ligand>
        <name>S-adenosyl-L-methionine</name>
        <dbReference type="ChEBI" id="CHEBI:59789"/>
    </ligand>
</feature>
<keyword id="KW-0004">4Fe-4S</keyword>
<keyword id="KW-0408">Iron</keyword>
<keyword id="KW-0411">Iron-sulfur</keyword>
<keyword id="KW-0479">Metal-binding</keyword>
<keyword id="KW-0489">Methyltransferase</keyword>
<keyword id="KW-0698">rRNA processing</keyword>
<keyword id="KW-0949">S-adenosyl-L-methionine</keyword>
<keyword id="KW-0808">Transferase</keyword>
<accession>A0K7U1</accession>
<dbReference type="EC" id="2.1.1.190" evidence="1"/>
<dbReference type="EMBL" id="CP000458">
    <property type="protein sequence ID" value="ABK08568.1"/>
    <property type="molecule type" value="Genomic_DNA"/>
</dbReference>
<dbReference type="SMR" id="A0K7U1"/>
<dbReference type="KEGG" id="bch:Bcen2424_1817"/>
<dbReference type="HOGENOM" id="CLU_014689_8_2_4"/>
<dbReference type="GO" id="GO:0051539">
    <property type="term" value="F:4 iron, 4 sulfur cluster binding"/>
    <property type="evidence" value="ECO:0007669"/>
    <property type="project" value="UniProtKB-KW"/>
</dbReference>
<dbReference type="GO" id="GO:0005506">
    <property type="term" value="F:iron ion binding"/>
    <property type="evidence" value="ECO:0007669"/>
    <property type="project" value="UniProtKB-UniRule"/>
</dbReference>
<dbReference type="GO" id="GO:0003723">
    <property type="term" value="F:RNA binding"/>
    <property type="evidence" value="ECO:0007669"/>
    <property type="project" value="InterPro"/>
</dbReference>
<dbReference type="GO" id="GO:0070041">
    <property type="term" value="F:rRNA (uridine-C5-)-methyltransferase activity"/>
    <property type="evidence" value="ECO:0007669"/>
    <property type="project" value="UniProtKB-UniRule"/>
</dbReference>
<dbReference type="GO" id="GO:0070475">
    <property type="term" value="P:rRNA base methylation"/>
    <property type="evidence" value="ECO:0007669"/>
    <property type="project" value="TreeGrafter"/>
</dbReference>
<dbReference type="CDD" id="cd02440">
    <property type="entry name" value="AdoMet_MTases"/>
    <property type="match status" value="1"/>
</dbReference>
<dbReference type="Gene3D" id="2.40.50.1070">
    <property type="match status" value="1"/>
</dbReference>
<dbReference type="Gene3D" id="2.40.50.140">
    <property type="entry name" value="Nucleic acid-binding proteins"/>
    <property type="match status" value="1"/>
</dbReference>
<dbReference type="Gene3D" id="3.40.50.150">
    <property type="entry name" value="Vaccinia Virus protein VP39"/>
    <property type="match status" value="1"/>
</dbReference>
<dbReference type="HAMAP" id="MF_01010">
    <property type="entry name" value="23SrRNA_methyltr_RlmD"/>
    <property type="match status" value="1"/>
</dbReference>
<dbReference type="InterPro" id="IPR001566">
    <property type="entry name" value="23S_rRNA_MeTrfase_RlmD"/>
</dbReference>
<dbReference type="InterPro" id="IPR012340">
    <property type="entry name" value="NA-bd_OB-fold"/>
</dbReference>
<dbReference type="InterPro" id="IPR029063">
    <property type="entry name" value="SAM-dependent_MTases_sf"/>
</dbReference>
<dbReference type="InterPro" id="IPR002792">
    <property type="entry name" value="TRAM_dom"/>
</dbReference>
<dbReference type="InterPro" id="IPR010280">
    <property type="entry name" value="U5_MeTrfase_fam"/>
</dbReference>
<dbReference type="NCBIfam" id="NF009639">
    <property type="entry name" value="PRK13168.1"/>
    <property type="match status" value="1"/>
</dbReference>
<dbReference type="PANTHER" id="PTHR11061:SF49">
    <property type="entry name" value="23S RRNA (URACIL(1939)-C(5))-METHYLTRANSFERASE RLMD"/>
    <property type="match status" value="1"/>
</dbReference>
<dbReference type="PANTHER" id="PTHR11061">
    <property type="entry name" value="RNA M5U METHYLTRANSFERASE"/>
    <property type="match status" value="1"/>
</dbReference>
<dbReference type="Pfam" id="PF05958">
    <property type="entry name" value="tRNA_U5-meth_tr"/>
    <property type="match status" value="1"/>
</dbReference>
<dbReference type="SUPFAM" id="SSF50249">
    <property type="entry name" value="Nucleic acid-binding proteins"/>
    <property type="match status" value="1"/>
</dbReference>
<dbReference type="SUPFAM" id="SSF53335">
    <property type="entry name" value="S-adenosyl-L-methionine-dependent methyltransferases"/>
    <property type="match status" value="1"/>
</dbReference>
<dbReference type="PROSITE" id="PS51687">
    <property type="entry name" value="SAM_MT_RNA_M5U"/>
    <property type="match status" value="1"/>
</dbReference>
<dbReference type="PROSITE" id="PS50926">
    <property type="entry name" value="TRAM"/>
    <property type="match status" value="1"/>
</dbReference>
<proteinExistence type="inferred from homology"/>
<name>RLMD_BURCH</name>
<reference key="1">
    <citation type="submission" date="2006-08" db="EMBL/GenBank/DDBJ databases">
        <title>Complete sequence of chromosome 1 of Burkholderia cenocepacia HI2424.</title>
        <authorList>
            <person name="Copeland A."/>
            <person name="Lucas S."/>
            <person name="Lapidus A."/>
            <person name="Barry K."/>
            <person name="Detter J.C."/>
            <person name="Glavina del Rio T."/>
            <person name="Hammon N."/>
            <person name="Israni S."/>
            <person name="Pitluck S."/>
            <person name="Chain P."/>
            <person name="Malfatti S."/>
            <person name="Shin M."/>
            <person name="Vergez L."/>
            <person name="Schmutz J."/>
            <person name="Larimer F."/>
            <person name="Land M."/>
            <person name="Hauser L."/>
            <person name="Kyrpides N."/>
            <person name="Kim E."/>
            <person name="LiPuma J.J."/>
            <person name="Gonzalez C.F."/>
            <person name="Konstantinidis K."/>
            <person name="Tiedje J.M."/>
            <person name="Richardson P."/>
        </authorList>
    </citation>
    <scope>NUCLEOTIDE SEQUENCE [LARGE SCALE GENOMIC DNA]</scope>
    <source>
        <strain>HI2424</strain>
    </source>
</reference>
<comment type="function">
    <text evidence="1">Catalyzes the formation of 5-methyl-uridine at position 1939 (m5U1939) in 23S rRNA.</text>
</comment>
<comment type="catalytic activity">
    <reaction evidence="1">
        <text>uridine(1939) in 23S rRNA + S-adenosyl-L-methionine = 5-methyluridine(1939) in 23S rRNA + S-adenosyl-L-homocysteine + H(+)</text>
        <dbReference type="Rhea" id="RHEA:42908"/>
        <dbReference type="Rhea" id="RHEA-COMP:10278"/>
        <dbReference type="Rhea" id="RHEA-COMP:10279"/>
        <dbReference type="ChEBI" id="CHEBI:15378"/>
        <dbReference type="ChEBI" id="CHEBI:57856"/>
        <dbReference type="ChEBI" id="CHEBI:59789"/>
        <dbReference type="ChEBI" id="CHEBI:65315"/>
        <dbReference type="ChEBI" id="CHEBI:74447"/>
        <dbReference type="EC" id="2.1.1.190"/>
    </reaction>
</comment>
<comment type="similarity">
    <text evidence="1">Belongs to the class I-like SAM-binding methyltransferase superfamily. RNA M5U methyltransferase family. RlmD subfamily.</text>
</comment>